<gene>
    <name type="primary">Paf-AHalpha</name>
    <name type="ORF">CG8962</name>
</gene>
<dbReference type="EMBL" id="AF098069">
    <property type="protein sequence ID" value="AAC83820.1"/>
    <property type="molecule type" value="mRNA"/>
</dbReference>
<dbReference type="EMBL" id="AE014298">
    <property type="protein sequence ID" value="AAF48514.1"/>
    <property type="molecule type" value="Genomic_DNA"/>
</dbReference>
<dbReference type="EMBL" id="AE014298">
    <property type="protein sequence ID" value="AAN09364.1"/>
    <property type="molecule type" value="Genomic_DNA"/>
</dbReference>
<dbReference type="EMBL" id="AY069389">
    <property type="protein sequence ID" value="AAL39534.1"/>
    <property type="molecule type" value="mRNA"/>
</dbReference>
<dbReference type="RefSeq" id="NP_525089.2">
    <property type="nucleotide sequence ID" value="NM_080350.4"/>
</dbReference>
<dbReference type="RefSeq" id="NP_727895.1">
    <property type="nucleotide sequence ID" value="NM_167461.2"/>
</dbReference>
<dbReference type="SMR" id="Q9VXP4"/>
<dbReference type="BioGRID" id="58877">
    <property type="interactions" value="1"/>
</dbReference>
<dbReference type="FunCoup" id="Q9VXP4">
    <property type="interactions" value="1664"/>
</dbReference>
<dbReference type="IntAct" id="Q9VXP4">
    <property type="interactions" value="6"/>
</dbReference>
<dbReference type="STRING" id="7227.FBpp0073975"/>
<dbReference type="PaxDb" id="7227-FBpp0073975"/>
<dbReference type="DNASU" id="32529"/>
<dbReference type="EnsemblMetazoa" id="FBtr0074190">
    <property type="protein sequence ID" value="FBpp0073975"/>
    <property type="gene ID" value="FBgn0025809"/>
</dbReference>
<dbReference type="EnsemblMetazoa" id="FBtr0074191">
    <property type="protein sequence ID" value="FBpp0073976"/>
    <property type="gene ID" value="FBgn0025809"/>
</dbReference>
<dbReference type="GeneID" id="32529"/>
<dbReference type="KEGG" id="dme:Dmel_CG8962"/>
<dbReference type="AGR" id="FB:FBgn0025809"/>
<dbReference type="CTD" id="32529"/>
<dbReference type="FlyBase" id="FBgn0025809">
    <property type="gene designation" value="Paf-AHalpha"/>
</dbReference>
<dbReference type="VEuPathDB" id="VectorBase:FBgn0025809"/>
<dbReference type="eggNOG" id="KOG1388">
    <property type="taxonomic scope" value="Eukaryota"/>
</dbReference>
<dbReference type="GeneTree" id="ENSGT00950000183199"/>
<dbReference type="HOGENOM" id="CLU_051989_2_0_1"/>
<dbReference type="InParanoid" id="Q9VXP4"/>
<dbReference type="OMA" id="AWNQYFA"/>
<dbReference type="OrthoDB" id="505607at2759"/>
<dbReference type="PhylomeDB" id="Q9VXP4"/>
<dbReference type="Reactome" id="R-DME-6798695">
    <property type="pathway name" value="Neutrophil degranulation"/>
</dbReference>
<dbReference type="Reactome" id="R-DME-6807505">
    <property type="pathway name" value="RNA polymerase II transcribes snRNA genes"/>
</dbReference>
<dbReference type="Reactome" id="R-DME-6811436">
    <property type="pathway name" value="COPI-independent Golgi-to-ER retrograde traffic"/>
</dbReference>
<dbReference type="BioGRID-ORCS" id="32529">
    <property type="hits" value="0 hits in 3 CRISPR screens"/>
</dbReference>
<dbReference type="ChiTaRS" id="Paf-AHalpha">
    <property type="organism name" value="fly"/>
</dbReference>
<dbReference type="GenomeRNAi" id="32529"/>
<dbReference type="PRO" id="PR:Q9VXP4"/>
<dbReference type="Proteomes" id="UP000000803">
    <property type="component" value="Chromosome X"/>
</dbReference>
<dbReference type="Bgee" id="FBgn0025809">
    <property type="expression patterns" value="Expressed in T neuron T5a (Drosophila) in embryonic/larval optic lobe (Drosophila) and 193 other cell types or tissues"/>
</dbReference>
<dbReference type="CDD" id="cd01820">
    <property type="entry name" value="PAF_acetylesterase_like"/>
    <property type="match status" value="1"/>
</dbReference>
<dbReference type="Gene3D" id="3.40.50.1110">
    <property type="entry name" value="SGNH hydrolase"/>
    <property type="match status" value="1"/>
</dbReference>
<dbReference type="InterPro" id="IPR013830">
    <property type="entry name" value="SGNH_hydro"/>
</dbReference>
<dbReference type="InterPro" id="IPR036514">
    <property type="entry name" value="SGNH_hydro_sf"/>
</dbReference>
<dbReference type="PANTHER" id="PTHR11852">
    <property type="entry name" value="PLATELET-ACTIVATING FACTOR ACETYLHYDROLASE"/>
    <property type="match status" value="1"/>
</dbReference>
<dbReference type="PANTHER" id="PTHR11852:SF0">
    <property type="entry name" value="PLATELET-ACTIVATING FACTOR ACETYLHYDROLASE IB SUBUNIT BETA HOMOLOG"/>
    <property type="match status" value="1"/>
</dbReference>
<dbReference type="Pfam" id="PF13472">
    <property type="entry name" value="Lipase_GDSL_2"/>
    <property type="match status" value="1"/>
</dbReference>
<dbReference type="SUPFAM" id="SSF52266">
    <property type="entry name" value="SGNH hydrolase"/>
    <property type="match status" value="1"/>
</dbReference>
<comment type="subunit">
    <text>Does not interact with Lis-1.</text>
</comment>
<comment type="similarity">
    <text evidence="1">Belongs to the 'GDSL' lipolytic enzyme family. Platelet-activating factor acetylhydrolase IB beta/gamma subunits subfamily.</text>
</comment>
<comment type="caution">
    <text evidence="1">Although strongly related to acetylglycerophosphocholine esterase enzymes, it lacks the active site and has no lipase activity.</text>
</comment>
<evidence type="ECO:0000305" key="1"/>
<proteinExistence type="evidence at protein level"/>
<reference key="1">
    <citation type="journal article" date="2000" name="Proteins">
        <title>Homologs of the alpha- and beta-subunits of mammalian brain platelet-activating factor acetylhydrolase Ib in the Drosophila melanogaster genome.</title>
        <authorList>
            <person name="Sheffield P.J."/>
            <person name="Garrard S."/>
            <person name="Caspi M."/>
            <person name="Aoki J."/>
            <person name="Arai H."/>
            <person name="Derewenda U."/>
            <person name="Inoue K."/>
            <person name="Suter B."/>
            <person name="Reiner O."/>
            <person name="Derewenda Z.S."/>
        </authorList>
    </citation>
    <scope>NUCLEOTIDE SEQUENCE [MRNA]</scope>
    <scope>LACK OF ENZYME ACTIVITY</scope>
    <scope>LACK OF INTERACTION WITH LIS-1</scope>
</reference>
<reference key="2">
    <citation type="journal article" date="2000" name="Science">
        <title>The genome sequence of Drosophila melanogaster.</title>
        <authorList>
            <person name="Adams M.D."/>
            <person name="Celniker S.E."/>
            <person name="Holt R.A."/>
            <person name="Evans C.A."/>
            <person name="Gocayne J.D."/>
            <person name="Amanatides P.G."/>
            <person name="Scherer S.E."/>
            <person name="Li P.W."/>
            <person name="Hoskins R.A."/>
            <person name="Galle R.F."/>
            <person name="George R.A."/>
            <person name="Lewis S.E."/>
            <person name="Richards S."/>
            <person name="Ashburner M."/>
            <person name="Henderson S.N."/>
            <person name="Sutton G.G."/>
            <person name="Wortman J.R."/>
            <person name="Yandell M.D."/>
            <person name="Zhang Q."/>
            <person name="Chen L.X."/>
            <person name="Brandon R.C."/>
            <person name="Rogers Y.-H.C."/>
            <person name="Blazej R.G."/>
            <person name="Champe M."/>
            <person name="Pfeiffer B.D."/>
            <person name="Wan K.H."/>
            <person name="Doyle C."/>
            <person name="Baxter E.G."/>
            <person name="Helt G."/>
            <person name="Nelson C.R."/>
            <person name="Miklos G.L.G."/>
            <person name="Abril J.F."/>
            <person name="Agbayani A."/>
            <person name="An H.-J."/>
            <person name="Andrews-Pfannkoch C."/>
            <person name="Baldwin D."/>
            <person name="Ballew R.M."/>
            <person name="Basu A."/>
            <person name="Baxendale J."/>
            <person name="Bayraktaroglu L."/>
            <person name="Beasley E.M."/>
            <person name="Beeson K.Y."/>
            <person name="Benos P.V."/>
            <person name="Berman B.P."/>
            <person name="Bhandari D."/>
            <person name="Bolshakov S."/>
            <person name="Borkova D."/>
            <person name="Botchan M.R."/>
            <person name="Bouck J."/>
            <person name="Brokstein P."/>
            <person name="Brottier P."/>
            <person name="Burtis K.C."/>
            <person name="Busam D.A."/>
            <person name="Butler H."/>
            <person name="Cadieu E."/>
            <person name="Center A."/>
            <person name="Chandra I."/>
            <person name="Cherry J.M."/>
            <person name="Cawley S."/>
            <person name="Dahlke C."/>
            <person name="Davenport L.B."/>
            <person name="Davies P."/>
            <person name="de Pablos B."/>
            <person name="Delcher A."/>
            <person name="Deng Z."/>
            <person name="Mays A.D."/>
            <person name="Dew I."/>
            <person name="Dietz S.M."/>
            <person name="Dodson K."/>
            <person name="Doup L.E."/>
            <person name="Downes M."/>
            <person name="Dugan-Rocha S."/>
            <person name="Dunkov B.C."/>
            <person name="Dunn P."/>
            <person name="Durbin K.J."/>
            <person name="Evangelista C.C."/>
            <person name="Ferraz C."/>
            <person name="Ferriera S."/>
            <person name="Fleischmann W."/>
            <person name="Fosler C."/>
            <person name="Gabrielian A.E."/>
            <person name="Garg N.S."/>
            <person name="Gelbart W.M."/>
            <person name="Glasser K."/>
            <person name="Glodek A."/>
            <person name="Gong F."/>
            <person name="Gorrell J.H."/>
            <person name="Gu Z."/>
            <person name="Guan P."/>
            <person name="Harris M."/>
            <person name="Harris N.L."/>
            <person name="Harvey D.A."/>
            <person name="Heiman T.J."/>
            <person name="Hernandez J.R."/>
            <person name="Houck J."/>
            <person name="Hostin D."/>
            <person name="Houston K.A."/>
            <person name="Howland T.J."/>
            <person name="Wei M.-H."/>
            <person name="Ibegwam C."/>
            <person name="Jalali M."/>
            <person name="Kalush F."/>
            <person name="Karpen G.H."/>
            <person name="Ke Z."/>
            <person name="Kennison J.A."/>
            <person name="Ketchum K.A."/>
            <person name="Kimmel B.E."/>
            <person name="Kodira C.D."/>
            <person name="Kraft C.L."/>
            <person name="Kravitz S."/>
            <person name="Kulp D."/>
            <person name="Lai Z."/>
            <person name="Lasko P."/>
            <person name="Lei Y."/>
            <person name="Levitsky A.A."/>
            <person name="Li J.H."/>
            <person name="Li Z."/>
            <person name="Liang Y."/>
            <person name="Lin X."/>
            <person name="Liu X."/>
            <person name="Mattei B."/>
            <person name="McIntosh T.C."/>
            <person name="McLeod M.P."/>
            <person name="McPherson D."/>
            <person name="Merkulov G."/>
            <person name="Milshina N.V."/>
            <person name="Mobarry C."/>
            <person name="Morris J."/>
            <person name="Moshrefi A."/>
            <person name="Mount S.M."/>
            <person name="Moy M."/>
            <person name="Murphy B."/>
            <person name="Murphy L."/>
            <person name="Muzny D.M."/>
            <person name="Nelson D.L."/>
            <person name="Nelson D.R."/>
            <person name="Nelson K.A."/>
            <person name="Nixon K."/>
            <person name="Nusskern D.R."/>
            <person name="Pacleb J.M."/>
            <person name="Palazzolo M."/>
            <person name="Pittman G.S."/>
            <person name="Pan S."/>
            <person name="Pollard J."/>
            <person name="Puri V."/>
            <person name="Reese M.G."/>
            <person name="Reinert K."/>
            <person name="Remington K."/>
            <person name="Saunders R.D.C."/>
            <person name="Scheeler F."/>
            <person name="Shen H."/>
            <person name="Shue B.C."/>
            <person name="Siden-Kiamos I."/>
            <person name="Simpson M."/>
            <person name="Skupski M.P."/>
            <person name="Smith T.J."/>
            <person name="Spier E."/>
            <person name="Spradling A.C."/>
            <person name="Stapleton M."/>
            <person name="Strong R."/>
            <person name="Sun E."/>
            <person name="Svirskas R."/>
            <person name="Tector C."/>
            <person name="Turner R."/>
            <person name="Venter E."/>
            <person name="Wang A.H."/>
            <person name="Wang X."/>
            <person name="Wang Z.-Y."/>
            <person name="Wassarman D.A."/>
            <person name="Weinstock G.M."/>
            <person name="Weissenbach J."/>
            <person name="Williams S.M."/>
            <person name="Woodage T."/>
            <person name="Worley K.C."/>
            <person name="Wu D."/>
            <person name="Yang S."/>
            <person name="Yao Q.A."/>
            <person name="Ye J."/>
            <person name="Yeh R.-F."/>
            <person name="Zaveri J.S."/>
            <person name="Zhan M."/>
            <person name="Zhang G."/>
            <person name="Zhao Q."/>
            <person name="Zheng L."/>
            <person name="Zheng X.H."/>
            <person name="Zhong F.N."/>
            <person name="Zhong W."/>
            <person name="Zhou X."/>
            <person name="Zhu S.C."/>
            <person name="Zhu X."/>
            <person name="Smith H.O."/>
            <person name="Gibbs R.A."/>
            <person name="Myers E.W."/>
            <person name="Rubin G.M."/>
            <person name="Venter J.C."/>
        </authorList>
    </citation>
    <scope>NUCLEOTIDE SEQUENCE [LARGE SCALE GENOMIC DNA]</scope>
    <source>
        <strain>Berkeley</strain>
    </source>
</reference>
<reference key="3">
    <citation type="journal article" date="2002" name="Genome Biol.">
        <title>Annotation of the Drosophila melanogaster euchromatic genome: a systematic review.</title>
        <authorList>
            <person name="Misra S."/>
            <person name="Crosby M.A."/>
            <person name="Mungall C.J."/>
            <person name="Matthews B.B."/>
            <person name="Campbell K.S."/>
            <person name="Hradecky P."/>
            <person name="Huang Y."/>
            <person name="Kaminker J.S."/>
            <person name="Millburn G.H."/>
            <person name="Prochnik S.E."/>
            <person name="Smith C.D."/>
            <person name="Tupy J.L."/>
            <person name="Whitfield E.J."/>
            <person name="Bayraktaroglu L."/>
            <person name="Berman B.P."/>
            <person name="Bettencourt B.R."/>
            <person name="Celniker S.E."/>
            <person name="de Grey A.D.N.J."/>
            <person name="Drysdale R.A."/>
            <person name="Harris N.L."/>
            <person name="Richter J."/>
            <person name="Russo S."/>
            <person name="Schroeder A.J."/>
            <person name="Shu S.Q."/>
            <person name="Stapleton M."/>
            <person name="Yamada C."/>
            <person name="Ashburner M."/>
            <person name="Gelbart W.M."/>
            <person name="Rubin G.M."/>
            <person name="Lewis S.E."/>
        </authorList>
    </citation>
    <scope>GENOME REANNOTATION</scope>
    <source>
        <strain>Berkeley</strain>
    </source>
</reference>
<reference key="4">
    <citation type="journal article" date="2002" name="Genome Biol.">
        <title>A Drosophila full-length cDNA resource.</title>
        <authorList>
            <person name="Stapleton M."/>
            <person name="Carlson J.W."/>
            <person name="Brokstein P."/>
            <person name="Yu C."/>
            <person name="Champe M."/>
            <person name="George R.A."/>
            <person name="Guarin H."/>
            <person name="Kronmiller B."/>
            <person name="Pacleb J.M."/>
            <person name="Park S."/>
            <person name="Wan K.H."/>
            <person name="Rubin G.M."/>
            <person name="Celniker S.E."/>
        </authorList>
    </citation>
    <scope>NUCLEOTIDE SEQUENCE [LARGE SCALE MRNA]</scope>
    <source>
        <strain>Berkeley</strain>
        <tissue>Embryo</tissue>
    </source>
</reference>
<organism>
    <name type="scientific">Drosophila melanogaster</name>
    <name type="common">Fruit fly</name>
    <dbReference type="NCBI Taxonomy" id="7227"/>
    <lineage>
        <taxon>Eukaryota</taxon>
        <taxon>Metazoa</taxon>
        <taxon>Ecdysozoa</taxon>
        <taxon>Arthropoda</taxon>
        <taxon>Hexapoda</taxon>
        <taxon>Insecta</taxon>
        <taxon>Pterygota</taxon>
        <taxon>Neoptera</taxon>
        <taxon>Endopterygota</taxon>
        <taxon>Diptera</taxon>
        <taxon>Brachycera</taxon>
        <taxon>Muscomorpha</taxon>
        <taxon>Ephydroidea</taxon>
        <taxon>Drosophilidae</taxon>
        <taxon>Drosophila</taxon>
        <taxon>Sophophora</taxon>
    </lineage>
</organism>
<name>PA1B2_DROME</name>
<feature type="chain" id="PRO_0000058150" description="Platelet-activating factor acetylhydrolase IB subunit beta homolog">
    <location>
        <begin position="1"/>
        <end position="225"/>
    </location>
</feature>
<feature type="sequence conflict" description="In Ref. 1; AAC83820." evidence="1" ref="1">
    <original>N</original>
    <variation>D</variation>
    <location>
        <position position="2"/>
    </location>
</feature>
<feature type="sequence conflict" description="In Ref. 1; AAC83820." evidence="1" ref="1">
    <original>Y</original>
    <variation>C</variation>
    <location>
        <position position="189"/>
    </location>
</feature>
<protein>
    <recommendedName>
        <fullName>Platelet-activating factor acetylhydrolase IB subunit beta homolog</fullName>
    </recommendedName>
</protein>
<keyword id="KW-1185">Reference proteome</keyword>
<sequence length="225" mass="25461">MNPCVLPTPLPDLDGDKRWHSIHRRFISDCREKDPDVIFLGDCIFETVQDTEAWNKYFAPLHCLNFSIRDDCTEHVLWRIENGALDNVNPKIVVLHVGTNNVRNSAEEVAEGVLANVTKIRQKLPNAYIVLPSLLPRGQQPNKLREKNAKINEVVNGLTKGLYRVQTVAIDKGLVQTDGSISHHDMFDYKNLTNAGAKKILEPLYDLLSQILNENEPENDLTPSE</sequence>
<accession>Q9VXP4</accession>
<accession>A4V4G6</accession>
<accession>O96644</accession>